<protein>
    <recommendedName>
        <fullName evidence="1">Methionyl-tRNA formyltransferase</fullName>
        <ecNumber evidence="1">2.1.2.9</ecNumber>
    </recommendedName>
</protein>
<gene>
    <name evidence="1" type="primary">fmt</name>
    <name type="ordered locus">DVU_3365</name>
</gene>
<keyword id="KW-0648">Protein biosynthesis</keyword>
<keyword id="KW-1185">Reference proteome</keyword>
<keyword id="KW-0808">Transferase</keyword>
<organism>
    <name type="scientific">Nitratidesulfovibrio vulgaris (strain ATCC 29579 / DSM 644 / CCUG 34227 / NCIMB 8303 / VKM B-1760 / Hildenborough)</name>
    <name type="common">Desulfovibrio vulgaris</name>
    <dbReference type="NCBI Taxonomy" id="882"/>
    <lineage>
        <taxon>Bacteria</taxon>
        <taxon>Pseudomonadati</taxon>
        <taxon>Thermodesulfobacteriota</taxon>
        <taxon>Desulfovibrionia</taxon>
        <taxon>Desulfovibrionales</taxon>
        <taxon>Desulfovibrionaceae</taxon>
        <taxon>Nitratidesulfovibrio</taxon>
    </lineage>
</organism>
<proteinExistence type="inferred from homology"/>
<dbReference type="EC" id="2.1.2.9" evidence="1"/>
<dbReference type="EMBL" id="AE017285">
    <property type="protein sequence ID" value="AAS97834.1"/>
    <property type="molecule type" value="Genomic_DNA"/>
</dbReference>
<dbReference type="RefSeq" id="WP_010940620.1">
    <property type="nucleotide sequence ID" value="NC_002937.3"/>
</dbReference>
<dbReference type="RefSeq" id="YP_012574.1">
    <property type="nucleotide sequence ID" value="NC_002937.3"/>
</dbReference>
<dbReference type="SMR" id="Q725Q9"/>
<dbReference type="STRING" id="882.DVU_3365"/>
<dbReference type="PaxDb" id="882-DVU_3365"/>
<dbReference type="EnsemblBacteria" id="AAS97834">
    <property type="protein sequence ID" value="AAS97834"/>
    <property type="gene ID" value="DVU_3365"/>
</dbReference>
<dbReference type="KEGG" id="dvu:DVU_3365"/>
<dbReference type="PATRIC" id="fig|882.5.peg.3055"/>
<dbReference type="eggNOG" id="COG0223">
    <property type="taxonomic scope" value="Bacteria"/>
</dbReference>
<dbReference type="HOGENOM" id="CLU_033347_1_1_7"/>
<dbReference type="OrthoDB" id="9802815at2"/>
<dbReference type="PhylomeDB" id="Q725Q9"/>
<dbReference type="Proteomes" id="UP000002194">
    <property type="component" value="Chromosome"/>
</dbReference>
<dbReference type="GO" id="GO:0005829">
    <property type="term" value="C:cytosol"/>
    <property type="evidence" value="ECO:0007669"/>
    <property type="project" value="TreeGrafter"/>
</dbReference>
<dbReference type="GO" id="GO:0004479">
    <property type="term" value="F:methionyl-tRNA formyltransferase activity"/>
    <property type="evidence" value="ECO:0007669"/>
    <property type="project" value="UniProtKB-UniRule"/>
</dbReference>
<dbReference type="CDD" id="cd08646">
    <property type="entry name" value="FMT_core_Met-tRNA-FMT_N"/>
    <property type="match status" value="1"/>
</dbReference>
<dbReference type="CDD" id="cd08704">
    <property type="entry name" value="Met_tRNA_FMT_C"/>
    <property type="match status" value="1"/>
</dbReference>
<dbReference type="Gene3D" id="3.40.50.12230">
    <property type="match status" value="1"/>
</dbReference>
<dbReference type="HAMAP" id="MF_00182">
    <property type="entry name" value="Formyl_trans"/>
    <property type="match status" value="1"/>
</dbReference>
<dbReference type="InterPro" id="IPR005794">
    <property type="entry name" value="Fmt"/>
</dbReference>
<dbReference type="InterPro" id="IPR005793">
    <property type="entry name" value="Formyl_trans_C"/>
</dbReference>
<dbReference type="InterPro" id="IPR002376">
    <property type="entry name" value="Formyl_transf_N"/>
</dbReference>
<dbReference type="InterPro" id="IPR036477">
    <property type="entry name" value="Formyl_transf_N_sf"/>
</dbReference>
<dbReference type="InterPro" id="IPR011034">
    <property type="entry name" value="Formyl_transferase-like_C_sf"/>
</dbReference>
<dbReference type="InterPro" id="IPR001555">
    <property type="entry name" value="GART_AS"/>
</dbReference>
<dbReference type="InterPro" id="IPR044135">
    <property type="entry name" value="Met-tRNA-FMT_C"/>
</dbReference>
<dbReference type="InterPro" id="IPR041711">
    <property type="entry name" value="Met-tRNA-FMT_N"/>
</dbReference>
<dbReference type="NCBIfam" id="TIGR00460">
    <property type="entry name" value="fmt"/>
    <property type="match status" value="1"/>
</dbReference>
<dbReference type="PANTHER" id="PTHR11138">
    <property type="entry name" value="METHIONYL-TRNA FORMYLTRANSFERASE"/>
    <property type="match status" value="1"/>
</dbReference>
<dbReference type="PANTHER" id="PTHR11138:SF5">
    <property type="entry name" value="METHIONYL-TRNA FORMYLTRANSFERASE, MITOCHONDRIAL"/>
    <property type="match status" value="1"/>
</dbReference>
<dbReference type="Pfam" id="PF02911">
    <property type="entry name" value="Formyl_trans_C"/>
    <property type="match status" value="1"/>
</dbReference>
<dbReference type="Pfam" id="PF00551">
    <property type="entry name" value="Formyl_trans_N"/>
    <property type="match status" value="1"/>
</dbReference>
<dbReference type="SUPFAM" id="SSF50486">
    <property type="entry name" value="FMT C-terminal domain-like"/>
    <property type="match status" value="1"/>
</dbReference>
<dbReference type="SUPFAM" id="SSF53328">
    <property type="entry name" value="Formyltransferase"/>
    <property type="match status" value="1"/>
</dbReference>
<dbReference type="PROSITE" id="PS00373">
    <property type="entry name" value="GART"/>
    <property type="match status" value="1"/>
</dbReference>
<accession>Q725Q9</accession>
<feature type="chain" id="PRO_0000082958" description="Methionyl-tRNA formyltransferase">
    <location>
        <begin position="1"/>
        <end position="330"/>
    </location>
</feature>
<feature type="binding site" evidence="1">
    <location>
        <begin position="116"/>
        <end position="119"/>
    </location>
    <ligand>
        <name>(6S)-5,6,7,8-tetrahydrofolate</name>
        <dbReference type="ChEBI" id="CHEBI:57453"/>
    </ligand>
</feature>
<comment type="function">
    <text evidence="1">Attaches a formyl group to the free amino group of methionyl-tRNA(fMet). The formyl group appears to play a dual role in the initiator identity of N-formylmethionyl-tRNA by promoting its recognition by IF2 and preventing the misappropriation of this tRNA by the elongation apparatus.</text>
</comment>
<comment type="catalytic activity">
    <reaction evidence="1">
        <text>L-methionyl-tRNA(fMet) + (6R)-10-formyltetrahydrofolate = N-formyl-L-methionyl-tRNA(fMet) + (6S)-5,6,7,8-tetrahydrofolate + H(+)</text>
        <dbReference type="Rhea" id="RHEA:24380"/>
        <dbReference type="Rhea" id="RHEA-COMP:9952"/>
        <dbReference type="Rhea" id="RHEA-COMP:9953"/>
        <dbReference type="ChEBI" id="CHEBI:15378"/>
        <dbReference type="ChEBI" id="CHEBI:57453"/>
        <dbReference type="ChEBI" id="CHEBI:78530"/>
        <dbReference type="ChEBI" id="CHEBI:78844"/>
        <dbReference type="ChEBI" id="CHEBI:195366"/>
        <dbReference type="EC" id="2.1.2.9"/>
    </reaction>
</comment>
<comment type="similarity">
    <text evidence="1">Belongs to the Fmt family.</text>
</comment>
<evidence type="ECO:0000255" key="1">
    <source>
        <dbReference type="HAMAP-Rule" id="MF_00182"/>
    </source>
</evidence>
<reference key="1">
    <citation type="journal article" date="2004" name="Nat. Biotechnol.">
        <title>The genome sequence of the anaerobic, sulfate-reducing bacterium Desulfovibrio vulgaris Hildenborough.</title>
        <authorList>
            <person name="Heidelberg J.F."/>
            <person name="Seshadri R."/>
            <person name="Haveman S.A."/>
            <person name="Hemme C.L."/>
            <person name="Paulsen I.T."/>
            <person name="Kolonay J.F."/>
            <person name="Eisen J.A."/>
            <person name="Ward N.L."/>
            <person name="Methe B.A."/>
            <person name="Brinkac L.M."/>
            <person name="Daugherty S.C."/>
            <person name="DeBoy R.T."/>
            <person name="Dodson R.J."/>
            <person name="Durkin A.S."/>
            <person name="Madupu R."/>
            <person name="Nelson W.C."/>
            <person name="Sullivan S.A."/>
            <person name="Fouts D.E."/>
            <person name="Haft D.H."/>
            <person name="Selengut J."/>
            <person name="Peterson J.D."/>
            <person name="Davidsen T.M."/>
            <person name="Zafar N."/>
            <person name="Zhou L."/>
            <person name="Radune D."/>
            <person name="Dimitrov G."/>
            <person name="Hance M."/>
            <person name="Tran K."/>
            <person name="Khouri H.M."/>
            <person name="Gill J."/>
            <person name="Utterback T.R."/>
            <person name="Feldblyum T.V."/>
            <person name="Wall J.D."/>
            <person name="Voordouw G."/>
            <person name="Fraser C.M."/>
        </authorList>
    </citation>
    <scope>NUCLEOTIDE SEQUENCE [LARGE SCALE GENOMIC DNA]</scope>
    <source>
        <strain>ATCC 29579 / DSM 644 / CCUG 34227 / NCIMB 8303 / VKM B-1760 / Hildenborough</strain>
    </source>
</reference>
<sequence length="330" mass="35197">MAESAPLKIVFMGTPDFAAASLRHLLAWDGCDVVGVYTQPDRPCGRGQQCRPSAVKMLALEHGLDVRQPVSFRDEADVQALRDFGADILVVAAYGLILPQSVLDAAPMGAVNVHGSLLPRYRGAAPIQRAVMNGDAVTGITIMQVVKQLDAGPMLLQKALGIGCDETSGQLHDQLAELGGRLLVETLARLRAGTIMPIPQDDALATYAAKLTKADGLVDWNRTAVEVHAQVRGVTPWPAAYFTLRREGQKDVRVTIEPGTIGPLLEQPAVPGTIVGLVDGAIAFACADRTYLVRTIRPADKKPMTGEAFWCGYLSRCEGECPGFAVCEGA</sequence>
<name>FMT_NITV2</name>